<proteinExistence type="evidence at protein level"/>
<reference key="1">
    <citation type="journal article" date="1991" name="Mol. Cell. Biol.">
        <title>PBX2 and PBX3, new homeobox genes with extensive homology to the human proto-oncogene PBX1.</title>
        <authorList>
            <person name="Monica K."/>
            <person name="Galili N."/>
            <person name="Nourse J."/>
            <person name="Saltman D."/>
            <person name="Cleary M.L."/>
        </authorList>
    </citation>
    <scope>NUCLEOTIDE SEQUENCE [MRNA]</scope>
</reference>
<reference key="2">
    <citation type="journal article" date="1995" name="Genomics">
        <title>The novel gene G17, located in the human major histocompatibility complex, encodes PBX2, a homeodomain-containing protein.</title>
        <authorList>
            <person name="Aguado B."/>
            <person name="Campbell R.D."/>
        </authorList>
    </citation>
    <scope>NUCLEOTIDE SEQUENCE [GENOMIC DNA]</scope>
</reference>
<reference key="3">
    <citation type="journal article" date="1994" name="Genomics">
        <title>Three genes in the human MHC class III region near the junction with the class II: gene for receptor of advanced glycosylation end products, PBX2 homeobox gene and a notch homolog, human counterpart of mouse mammary tumor gene int-3.</title>
        <authorList>
            <person name="Sugaya K."/>
            <person name="Fukagawa T."/>
            <person name="Matsumoto K."/>
            <person name="Mita K."/>
            <person name="Takahashi E."/>
            <person name="Ando A."/>
            <person name="Inoko H."/>
            <person name="Ikemura T."/>
        </authorList>
    </citation>
    <scope>NUCLEOTIDE SEQUENCE [GENOMIC DNA]</scope>
</reference>
<reference key="4">
    <citation type="journal article" date="2003" name="Genome Res.">
        <title>Analysis of the gene-dense major histocompatibility complex class III region and its comparison to mouse.</title>
        <authorList>
            <person name="Xie T."/>
            <person name="Rowen L."/>
            <person name="Aguado B."/>
            <person name="Ahearn M.E."/>
            <person name="Madan A."/>
            <person name="Qin S."/>
            <person name="Campbell R.D."/>
            <person name="Hood L."/>
        </authorList>
    </citation>
    <scope>NUCLEOTIDE SEQUENCE [LARGE SCALE GENOMIC DNA]</scope>
</reference>
<reference key="5">
    <citation type="submission" date="2005-07" db="EMBL/GenBank/DDBJ databases">
        <authorList>
            <person name="Mural R.J."/>
            <person name="Istrail S."/>
            <person name="Sutton G.G."/>
            <person name="Florea L."/>
            <person name="Halpern A.L."/>
            <person name="Mobarry C.M."/>
            <person name="Lippert R."/>
            <person name="Walenz B."/>
            <person name="Shatkay H."/>
            <person name="Dew I."/>
            <person name="Miller J.R."/>
            <person name="Flanigan M.J."/>
            <person name="Edwards N.J."/>
            <person name="Bolanos R."/>
            <person name="Fasulo D."/>
            <person name="Halldorsson B.V."/>
            <person name="Hannenhalli S."/>
            <person name="Turner R."/>
            <person name="Yooseph S."/>
            <person name="Lu F."/>
            <person name="Nusskern D.R."/>
            <person name="Shue B.C."/>
            <person name="Zheng X.H."/>
            <person name="Zhong F."/>
            <person name="Delcher A.L."/>
            <person name="Huson D.H."/>
            <person name="Kravitz S.A."/>
            <person name="Mouchard L."/>
            <person name="Reinert K."/>
            <person name="Remington K.A."/>
            <person name="Clark A.G."/>
            <person name="Waterman M.S."/>
            <person name="Eichler E.E."/>
            <person name="Adams M.D."/>
            <person name="Hunkapiller M.W."/>
            <person name="Myers E.W."/>
            <person name="Venter J.C."/>
        </authorList>
    </citation>
    <scope>NUCLEOTIDE SEQUENCE [LARGE SCALE GENOMIC DNA]</scope>
</reference>
<reference key="6">
    <citation type="journal article" date="2003" name="Nature">
        <title>The DNA sequence and analysis of human chromosome 6.</title>
        <authorList>
            <person name="Mungall A.J."/>
            <person name="Palmer S.A."/>
            <person name="Sims S.K."/>
            <person name="Edwards C.A."/>
            <person name="Ashurst J.L."/>
            <person name="Wilming L."/>
            <person name="Jones M.C."/>
            <person name="Horton R."/>
            <person name="Hunt S.E."/>
            <person name="Scott C.E."/>
            <person name="Gilbert J.G.R."/>
            <person name="Clamp M.E."/>
            <person name="Bethel G."/>
            <person name="Milne S."/>
            <person name="Ainscough R."/>
            <person name="Almeida J.P."/>
            <person name="Ambrose K.D."/>
            <person name="Andrews T.D."/>
            <person name="Ashwell R.I.S."/>
            <person name="Babbage A.K."/>
            <person name="Bagguley C.L."/>
            <person name="Bailey J."/>
            <person name="Banerjee R."/>
            <person name="Barker D.J."/>
            <person name="Barlow K.F."/>
            <person name="Bates K."/>
            <person name="Beare D.M."/>
            <person name="Beasley H."/>
            <person name="Beasley O."/>
            <person name="Bird C.P."/>
            <person name="Blakey S.E."/>
            <person name="Bray-Allen S."/>
            <person name="Brook J."/>
            <person name="Brown A.J."/>
            <person name="Brown J.Y."/>
            <person name="Burford D.C."/>
            <person name="Burrill W."/>
            <person name="Burton J."/>
            <person name="Carder C."/>
            <person name="Carter N.P."/>
            <person name="Chapman J.C."/>
            <person name="Clark S.Y."/>
            <person name="Clark G."/>
            <person name="Clee C.M."/>
            <person name="Clegg S."/>
            <person name="Cobley V."/>
            <person name="Collier R.E."/>
            <person name="Collins J.E."/>
            <person name="Colman L.K."/>
            <person name="Corby N.R."/>
            <person name="Coville G.J."/>
            <person name="Culley K.M."/>
            <person name="Dhami P."/>
            <person name="Davies J."/>
            <person name="Dunn M."/>
            <person name="Earthrowl M.E."/>
            <person name="Ellington A.E."/>
            <person name="Evans K.A."/>
            <person name="Faulkner L."/>
            <person name="Francis M.D."/>
            <person name="Frankish A."/>
            <person name="Frankland J."/>
            <person name="French L."/>
            <person name="Garner P."/>
            <person name="Garnett J."/>
            <person name="Ghori M.J."/>
            <person name="Gilby L.M."/>
            <person name="Gillson C.J."/>
            <person name="Glithero R.J."/>
            <person name="Grafham D.V."/>
            <person name="Grant M."/>
            <person name="Gribble S."/>
            <person name="Griffiths C."/>
            <person name="Griffiths M.N.D."/>
            <person name="Hall R."/>
            <person name="Halls K.S."/>
            <person name="Hammond S."/>
            <person name="Harley J.L."/>
            <person name="Hart E.A."/>
            <person name="Heath P.D."/>
            <person name="Heathcott R."/>
            <person name="Holmes S.J."/>
            <person name="Howden P.J."/>
            <person name="Howe K.L."/>
            <person name="Howell G.R."/>
            <person name="Huckle E."/>
            <person name="Humphray S.J."/>
            <person name="Humphries M.D."/>
            <person name="Hunt A.R."/>
            <person name="Johnson C.M."/>
            <person name="Joy A.A."/>
            <person name="Kay M."/>
            <person name="Keenan S.J."/>
            <person name="Kimberley A.M."/>
            <person name="King A."/>
            <person name="Laird G.K."/>
            <person name="Langford C."/>
            <person name="Lawlor S."/>
            <person name="Leongamornlert D.A."/>
            <person name="Leversha M."/>
            <person name="Lloyd C.R."/>
            <person name="Lloyd D.M."/>
            <person name="Loveland J.E."/>
            <person name="Lovell J."/>
            <person name="Martin S."/>
            <person name="Mashreghi-Mohammadi M."/>
            <person name="Maslen G.L."/>
            <person name="Matthews L."/>
            <person name="McCann O.T."/>
            <person name="McLaren S.J."/>
            <person name="McLay K."/>
            <person name="McMurray A."/>
            <person name="Moore M.J.F."/>
            <person name="Mullikin J.C."/>
            <person name="Niblett D."/>
            <person name="Nickerson T."/>
            <person name="Novik K.L."/>
            <person name="Oliver K."/>
            <person name="Overton-Larty E.K."/>
            <person name="Parker A."/>
            <person name="Patel R."/>
            <person name="Pearce A.V."/>
            <person name="Peck A.I."/>
            <person name="Phillimore B.J.C.T."/>
            <person name="Phillips S."/>
            <person name="Plumb R.W."/>
            <person name="Porter K.M."/>
            <person name="Ramsey Y."/>
            <person name="Ranby S.A."/>
            <person name="Rice C.M."/>
            <person name="Ross M.T."/>
            <person name="Searle S.M."/>
            <person name="Sehra H.K."/>
            <person name="Sheridan E."/>
            <person name="Skuce C.D."/>
            <person name="Smith S."/>
            <person name="Smith M."/>
            <person name="Spraggon L."/>
            <person name="Squares S.L."/>
            <person name="Steward C.A."/>
            <person name="Sycamore N."/>
            <person name="Tamlyn-Hall G."/>
            <person name="Tester J."/>
            <person name="Theaker A.J."/>
            <person name="Thomas D.W."/>
            <person name="Thorpe A."/>
            <person name="Tracey A."/>
            <person name="Tromans A."/>
            <person name="Tubby B."/>
            <person name="Wall M."/>
            <person name="Wallis J.M."/>
            <person name="West A.P."/>
            <person name="White S.S."/>
            <person name="Whitehead S.L."/>
            <person name="Whittaker H."/>
            <person name="Wild A."/>
            <person name="Willey D.J."/>
            <person name="Wilmer T.E."/>
            <person name="Wood J.M."/>
            <person name="Wray P.W."/>
            <person name="Wyatt J.C."/>
            <person name="Young L."/>
            <person name="Younger R.M."/>
            <person name="Bentley D.R."/>
            <person name="Coulson A."/>
            <person name="Durbin R.M."/>
            <person name="Hubbard T."/>
            <person name="Sulston J.E."/>
            <person name="Dunham I."/>
            <person name="Rogers J."/>
            <person name="Beck S."/>
        </authorList>
    </citation>
    <scope>NUCLEOTIDE SEQUENCE [LARGE SCALE GENOMIC DNA]</scope>
</reference>
<reference key="7">
    <citation type="journal article" date="2004" name="Genome Res.">
        <title>The status, quality, and expansion of the NIH full-length cDNA project: the Mammalian Gene Collection (MGC).</title>
        <authorList>
            <consortium name="The MGC Project Team"/>
        </authorList>
    </citation>
    <scope>NUCLEOTIDE SEQUENCE [LARGE SCALE MRNA]</scope>
    <source>
        <tissue>Lung</tissue>
    </source>
</reference>
<reference key="8">
    <citation type="journal article" date="1994" name="Mol. Cell. Biol.">
        <title>Fusion with E2A converts the Pbx1 homeodomain protein into a constitutive transcriptional activator in human leukemias carrying the t(1;19) translocation.</title>
        <authorList>
            <person name="Lu Q."/>
            <person name="Wright D.D."/>
            <person name="Kamps M.P."/>
        </authorList>
    </citation>
    <scope>CHARACTERIZATION</scope>
</reference>
<reference key="9">
    <citation type="journal article" date="2000" name="J. Biol. Chem.">
        <title>Functional cloning and characterization of a novel nonhomeodomain protein that inhibits the binding of PBX1-HOX complexes to DNA.</title>
        <authorList>
            <person name="Abramovich C."/>
            <person name="Shen W.-F."/>
            <person name="Pineault N."/>
            <person name="Imren S."/>
            <person name="Montpetit B."/>
            <person name="Largman C."/>
            <person name="Humphries R.K."/>
        </authorList>
    </citation>
    <scope>INTERACTION WITH PBXIP1</scope>
</reference>
<reference key="10">
    <citation type="journal article" date="2003" name="Blood">
        <title>Homeodomain proteins MEIS1 and PBXs regulate the lineage-specific transcription of the platelet factor 4 gene.</title>
        <authorList>
            <person name="Okada Y."/>
            <person name="Nagai R."/>
            <person name="Sato T."/>
            <person name="Matsuura E."/>
            <person name="Minami T."/>
            <person name="Morita I."/>
            <person name="Doi T."/>
        </authorList>
    </citation>
    <scope>FUNCTION</scope>
    <scope>INTERACTION WITH MEIS1</scope>
</reference>
<reference key="11">
    <citation type="journal article" date="2007" name="Science">
        <title>ATM and ATR substrate analysis reveals extensive protein networks responsive to DNA damage.</title>
        <authorList>
            <person name="Matsuoka S."/>
            <person name="Ballif B.A."/>
            <person name="Smogorzewska A."/>
            <person name="McDonald E.R. III"/>
            <person name="Hurov K.E."/>
            <person name="Luo J."/>
            <person name="Bakalarski C.E."/>
            <person name="Zhao Z."/>
            <person name="Solimini N."/>
            <person name="Lerenthal Y."/>
            <person name="Shiloh Y."/>
            <person name="Gygi S.P."/>
            <person name="Elledge S.J."/>
        </authorList>
    </citation>
    <scope>IDENTIFICATION BY MASS SPECTROMETRY [LARGE SCALE ANALYSIS]</scope>
    <source>
        <tissue>Embryonic kidney</tissue>
    </source>
</reference>
<reference key="12">
    <citation type="journal article" date="2008" name="J. Proteome Res.">
        <title>Combining protein-based IMAC, peptide-based IMAC, and MudPIT for efficient phosphoproteomic analysis.</title>
        <authorList>
            <person name="Cantin G.T."/>
            <person name="Yi W."/>
            <person name="Lu B."/>
            <person name="Park S.K."/>
            <person name="Xu T."/>
            <person name="Lee J.-D."/>
            <person name="Yates J.R. III"/>
        </authorList>
    </citation>
    <scope>PHOSPHORYLATION [LARGE SCALE ANALYSIS] AT SER-151</scope>
    <scope>IDENTIFICATION BY MASS SPECTROMETRY [LARGE SCALE ANALYSIS]</scope>
    <source>
        <tissue>Cervix carcinoma</tissue>
    </source>
</reference>
<reference key="13">
    <citation type="journal article" date="2008" name="Proc. Natl. Acad. Sci. U.S.A.">
        <title>A quantitative atlas of mitotic phosphorylation.</title>
        <authorList>
            <person name="Dephoure N."/>
            <person name="Zhou C."/>
            <person name="Villen J."/>
            <person name="Beausoleil S.A."/>
            <person name="Bakalarski C.E."/>
            <person name="Elledge S.J."/>
            <person name="Gygi S.P."/>
        </authorList>
    </citation>
    <scope>PHOSPHORYLATION [LARGE SCALE ANALYSIS] AT SER-151 AND SER-330</scope>
    <scope>IDENTIFICATION BY MASS SPECTROMETRY [LARGE SCALE ANALYSIS]</scope>
    <source>
        <tissue>Cervix carcinoma</tissue>
    </source>
</reference>
<reference key="14">
    <citation type="journal article" date="2010" name="Sci. Signal.">
        <title>Quantitative phosphoproteomics reveals widespread full phosphorylation site occupancy during mitosis.</title>
        <authorList>
            <person name="Olsen J.V."/>
            <person name="Vermeulen M."/>
            <person name="Santamaria A."/>
            <person name="Kumar C."/>
            <person name="Miller M.L."/>
            <person name="Jensen L.J."/>
            <person name="Gnad F."/>
            <person name="Cox J."/>
            <person name="Jensen T.S."/>
            <person name="Nigg E.A."/>
            <person name="Brunak S."/>
            <person name="Mann M."/>
        </authorList>
    </citation>
    <scope>PHOSPHORYLATION [LARGE SCALE ANALYSIS] AT SER-151</scope>
    <scope>IDENTIFICATION BY MASS SPECTROMETRY [LARGE SCALE ANALYSIS]</scope>
    <source>
        <tissue>Cervix carcinoma</tissue>
    </source>
</reference>
<reference key="15">
    <citation type="journal article" date="2011" name="BMC Syst. Biol.">
        <title>Initial characterization of the human central proteome.</title>
        <authorList>
            <person name="Burkard T.R."/>
            <person name="Planyavsky M."/>
            <person name="Kaupe I."/>
            <person name="Breitwieser F.P."/>
            <person name="Buerckstuemmer T."/>
            <person name="Bennett K.L."/>
            <person name="Superti-Furga G."/>
            <person name="Colinge J."/>
        </authorList>
    </citation>
    <scope>IDENTIFICATION BY MASS SPECTROMETRY [LARGE SCALE ANALYSIS]</scope>
</reference>
<reference key="16">
    <citation type="journal article" date="2011" name="Sci. Signal.">
        <title>System-wide temporal characterization of the proteome and phosphoproteome of human embryonic stem cell differentiation.</title>
        <authorList>
            <person name="Rigbolt K.T."/>
            <person name="Prokhorova T.A."/>
            <person name="Akimov V."/>
            <person name="Henningsen J."/>
            <person name="Johansen P.T."/>
            <person name="Kratchmarova I."/>
            <person name="Kassem M."/>
            <person name="Mann M."/>
            <person name="Olsen J.V."/>
            <person name="Blagoev B."/>
        </authorList>
    </citation>
    <scope>PHOSPHORYLATION [LARGE SCALE ANALYSIS] AT SER-330</scope>
    <scope>IDENTIFICATION BY MASS SPECTROMETRY [LARGE SCALE ANALYSIS]</scope>
</reference>
<reference key="17">
    <citation type="journal article" date="2013" name="J. Proteome Res.">
        <title>Toward a comprehensive characterization of a human cancer cell phosphoproteome.</title>
        <authorList>
            <person name="Zhou H."/>
            <person name="Di Palma S."/>
            <person name="Preisinger C."/>
            <person name="Peng M."/>
            <person name="Polat A.N."/>
            <person name="Heck A.J."/>
            <person name="Mohammed S."/>
        </authorList>
    </citation>
    <scope>PHOSPHORYLATION [LARGE SCALE ANALYSIS] AT SER-136; SER-151 AND SER-330</scope>
    <scope>IDENTIFICATION BY MASS SPECTROMETRY [LARGE SCALE ANALYSIS]</scope>
    <source>
        <tissue>Cervix carcinoma</tissue>
        <tissue>Erythroleukemia</tissue>
    </source>
</reference>
<reference key="18">
    <citation type="journal article" date="2014" name="J. Proteomics">
        <title>An enzyme assisted RP-RPLC approach for in-depth analysis of human liver phosphoproteome.</title>
        <authorList>
            <person name="Bian Y."/>
            <person name="Song C."/>
            <person name="Cheng K."/>
            <person name="Dong M."/>
            <person name="Wang F."/>
            <person name="Huang J."/>
            <person name="Sun D."/>
            <person name="Wang L."/>
            <person name="Ye M."/>
            <person name="Zou H."/>
        </authorList>
    </citation>
    <scope>PHOSPHORYLATION [LARGE SCALE ANALYSIS] AT SER-136</scope>
    <scope>IDENTIFICATION BY MASS SPECTROMETRY [LARGE SCALE ANALYSIS]</scope>
    <source>
        <tissue>Liver</tissue>
    </source>
</reference>
<sequence length="430" mass="45881">MDERLLGPPPPGGGRGGLGLVSGEPGGPGEPPGGGDPGGGSGGVPGGRGKQDIGDILQQIMTITDQSLDEAQAKKHALNCHRMKPALFSVLCEIKEKTGLSIRSSQEEEPVDPQLMRLDNMLLAEGVAGPEKGGGSAAAAAAAAASGGGVSPDNSIEHSDYRSKLAQIRHIYHSELEKYEQACNEFTTHVMNLLREQSRTRPVAPKEMERMVSIIHRKFSAIQMQLKQSTCEAVMILRSRFLDARRKRRNFSKQATEVLNEYFYSHLSNPYPSEEAKEELAKKCGITVSQVSNWFGNKRIRYKKNIGKFQEEANIYAVKTAVSVTQGGHSRTSSPTPPSSAGSGGSFNLSGSGDMFLGMPGLNGDSYSASQVESLRHSMGPGGYGDNLGGGQMYSPREMRANGSWQEAVTPSSVTSPTEGPGSVHSDTSN</sequence>
<name>PBX2_HUMAN</name>
<dbReference type="EMBL" id="X59842">
    <property type="protein sequence ID" value="CAA42503.1"/>
    <property type="molecule type" value="mRNA"/>
</dbReference>
<dbReference type="EMBL" id="X80700">
    <property type="protein sequence ID" value="CAA56717.1"/>
    <property type="molecule type" value="Genomic_DNA"/>
</dbReference>
<dbReference type="EMBL" id="D28769">
    <property type="protein sequence ID" value="BAA05957.1"/>
    <property type="molecule type" value="Genomic_DNA"/>
</dbReference>
<dbReference type="EMBL" id="U89336">
    <property type="protein sequence ID" value="AAB47490.1"/>
    <property type="molecule type" value="Genomic_DNA"/>
</dbReference>
<dbReference type="EMBL" id="AL662884">
    <property type="status" value="NOT_ANNOTATED_CDS"/>
    <property type="molecule type" value="Genomic_DNA"/>
</dbReference>
<dbReference type="EMBL" id="AL662830">
    <property type="status" value="NOT_ANNOTATED_CDS"/>
    <property type="molecule type" value="Genomic_DNA"/>
</dbReference>
<dbReference type="EMBL" id="AL845464">
    <property type="status" value="NOT_ANNOTATED_CDS"/>
    <property type="molecule type" value="Genomic_DNA"/>
</dbReference>
<dbReference type="EMBL" id="BX284686">
    <property type="status" value="NOT_ANNOTATED_CDS"/>
    <property type="molecule type" value="Genomic_DNA"/>
</dbReference>
<dbReference type="EMBL" id="BX927239">
    <property type="status" value="NOT_ANNOTATED_CDS"/>
    <property type="molecule type" value="Genomic_DNA"/>
</dbReference>
<dbReference type="EMBL" id="CR933878">
    <property type="status" value="NOT_ANNOTATED_CDS"/>
    <property type="molecule type" value="Genomic_DNA"/>
</dbReference>
<dbReference type="EMBL" id="CR812478">
    <property type="status" value="NOT_ANNOTATED_CDS"/>
    <property type="molecule type" value="Genomic_DNA"/>
</dbReference>
<dbReference type="EMBL" id="CH471081">
    <property type="protein sequence ID" value="EAX03613.1"/>
    <property type="molecule type" value="Genomic_DNA"/>
</dbReference>
<dbReference type="EMBL" id="BC082261">
    <property type="protein sequence ID" value="AAH82261.1"/>
    <property type="molecule type" value="mRNA"/>
</dbReference>
<dbReference type="CCDS" id="CCDS4748.1"/>
<dbReference type="PIR" id="A56002">
    <property type="entry name" value="A56002"/>
</dbReference>
<dbReference type="RefSeq" id="NP_002577.2">
    <property type="nucleotide sequence ID" value="NM_002586.4"/>
</dbReference>
<dbReference type="SMR" id="P40425"/>
<dbReference type="BioGRID" id="111122">
    <property type="interactions" value="73"/>
</dbReference>
<dbReference type="CORUM" id="P40425"/>
<dbReference type="FunCoup" id="P40425">
    <property type="interactions" value="2745"/>
</dbReference>
<dbReference type="IntAct" id="P40425">
    <property type="interactions" value="74"/>
</dbReference>
<dbReference type="MINT" id="P40425"/>
<dbReference type="STRING" id="9606.ENSP00000364190"/>
<dbReference type="GlyCosmos" id="P40425">
    <property type="glycosylation" value="1 site, 1 glycan"/>
</dbReference>
<dbReference type="GlyGen" id="P40425">
    <property type="glycosylation" value="5 sites, 1 O-linked glycan (4 sites)"/>
</dbReference>
<dbReference type="iPTMnet" id="P40425"/>
<dbReference type="MetOSite" id="P40425"/>
<dbReference type="PhosphoSitePlus" id="P40425"/>
<dbReference type="BioMuta" id="PBX2"/>
<dbReference type="DMDM" id="1352729"/>
<dbReference type="jPOST" id="P40425"/>
<dbReference type="MassIVE" id="P40425"/>
<dbReference type="PaxDb" id="9606-ENSP00000364190"/>
<dbReference type="PeptideAtlas" id="P40425"/>
<dbReference type="ProteomicsDB" id="55369"/>
<dbReference type="Pumba" id="P40425"/>
<dbReference type="Antibodypedia" id="28518">
    <property type="antibodies" value="214 antibodies from 27 providers"/>
</dbReference>
<dbReference type="DNASU" id="5089"/>
<dbReference type="Ensembl" id="ENST00000375050.6">
    <property type="protein sequence ID" value="ENSP00000364190.3"/>
    <property type="gene ID" value="ENSG00000204304.12"/>
</dbReference>
<dbReference type="Ensembl" id="ENST00000383270.4">
    <property type="protein sequence ID" value="ENSP00000372757.4"/>
    <property type="gene ID" value="ENSG00000206315.9"/>
</dbReference>
<dbReference type="Ensembl" id="ENST00000420432.2">
    <property type="protein sequence ID" value="ENSP00000410710.2"/>
    <property type="gene ID" value="ENSG00000236353.7"/>
</dbReference>
<dbReference type="Ensembl" id="ENST00000431537.2">
    <property type="protein sequence ID" value="ENSP00000390009.2"/>
    <property type="gene ID" value="ENSG00000232005.7"/>
</dbReference>
<dbReference type="Ensembl" id="ENST00000433552.2">
    <property type="protein sequence ID" value="ENSP00000391745.2"/>
    <property type="gene ID" value="ENSG00000224952.7"/>
</dbReference>
<dbReference type="Ensembl" id="ENST00000453487.2">
    <property type="protein sequence ID" value="ENSP00000403948.2"/>
    <property type="gene ID" value="ENSG00000225987.7"/>
</dbReference>
<dbReference type="Ensembl" id="ENST00000453961.2">
    <property type="protein sequence ID" value="ENSP00000397177.2"/>
    <property type="gene ID" value="ENSG00000237344.7"/>
</dbReference>
<dbReference type="GeneID" id="5089"/>
<dbReference type="KEGG" id="hsa:5089"/>
<dbReference type="MANE-Select" id="ENST00000375050.6">
    <property type="protein sequence ID" value="ENSP00000364190.3"/>
    <property type="RefSeq nucleotide sequence ID" value="NM_002586.5"/>
    <property type="RefSeq protein sequence ID" value="NP_002577.2"/>
</dbReference>
<dbReference type="UCSC" id="uc003oav.2">
    <property type="organism name" value="human"/>
</dbReference>
<dbReference type="AGR" id="HGNC:8633"/>
<dbReference type="CTD" id="5089"/>
<dbReference type="DisGeNET" id="5089"/>
<dbReference type="GeneCards" id="PBX2"/>
<dbReference type="HGNC" id="HGNC:8633">
    <property type="gene designation" value="PBX2"/>
</dbReference>
<dbReference type="HPA" id="ENSG00000204304">
    <property type="expression patterns" value="Low tissue specificity"/>
</dbReference>
<dbReference type="MIM" id="176311">
    <property type="type" value="gene"/>
</dbReference>
<dbReference type="neXtProt" id="NX_P40425"/>
<dbReference type="OpenTargets" id="ENSG00000204304"/>
<dbReference type="PharmGKB" id="PA32971"/>
<dbReference type="VEuPathDB" id="HostDB:ENSG00000204304"/>
<dbReference type="eggNOG" id="KOG0774">
    <property type="taxonomic scope" value="Eukaryota"/>
</dbReference>
<dbReference type="GeneTree" id="ENSGT00940000160293"/>
<dbReference type="HOGENOM" id="CLU_041153_0_0_1"/>
<dbReference type="InParanoid" id="P40425"/>
<dbReference type="OMA" id="DLARQCN"/>
<dbReference type="OrthoDB" id="4187154at2759"/>
<dbReference type="PAN-GO" id="P40425">
    <property type="GO annotations" value="8 GO annotations based on evolutionary models"/>
</dbReference>
<dbReference type="PhylomeDB" id="P40425"/>
<dbReference type="TreeFam" id="TF314340"/>
<dbReference type="PathwayCommons" id="P40425"/>
<dbReference type="SignaLink" id="P40425"/>
<dbReference type="SIGNOR" id="P40425"/>
<dbReference type="BioGRID-ORCS" id="5089">
    <property type="hits" value="28 hits in 1172 CRISPR screens"/>
</dbReference>
<dbReference type="ChiTaRS" id="PBX2">
    <property type="organism name" value="human"/>
</dbReference>
<dbReference type="GeneWiki" id="PBX2"/>
<dbReference type="GenomeRNAi" id="5089"/>
<dbReference type="Pharos" id="P40425">
    <property type="development level" value="Tbio"/>
</dbReference>
<dbReference type="PRO" id="PR:P40425"/>
<dbReference type="Proteomes" id="UP000005640">
    <property type="component" value="Chromosome 6"/>
</dbReference>
<dbReference type="RNAct" id="P40425">
    <property type="molecule type" value="protein"/>
</dbReference>
<dbReference type="Bgee" id="ENSG00000204304">
    <property type="expression patterns" value="Expressed in right lobe of thyroid gland and 98 other cell types or tissues"/>
</dbReference>
<dbReference type="ExpressionAtlas" id="P40425">
    <property type="expression patterns" value="baseline and differential"/>
</dbReference>
<dbReference type="GO" id="GO:0000785">
    <property type="term" value="C:chromatin"/>
    <property type="evidence" value="ECO:0000247"/>
    <property type="project" value="NTNU_SB"/>
</dbReference>
<dbReference type="GO" id="GO:0005634">
    <property type="term" value="C:nucleus"/>
    <property type="evidence" value="ECO:0000314"/>
    <property type="project" value="UniProtKB"/>
</dbReference>
<dbReference type="GO" id="GO:0005667">
    <property type="term" value="C:transcription regulator complex"/>
    <property type="evidence" value="ECO:0007669"/>
    <property type="project" value="Ensembl"/>
</dbReference>
<dbReference type="GO" id="GO:0003682">
    <property type="term" value="F:chromatin binding"/>
    <property type="evidence" value="ECO:0007669"/>
    <property type="project" value="Ensembl"/>
</dbReference>
<dbReference type="GO" id="GO:0001228">
    <property type="term" value="F:DNA-binding transcription activator activity, RNA polymerase II-specific"/>
    <property type="evidence" value="ECO:0000314"/>
    <property type="project" value="NTNU_SB"/>
</dbReference>
<dbReference type="GO" id="GO:0000981">
    <property type="term" value="F:DNA-binding transcription factor activity, RNA polymerase II-specific"/>
    <property type="evidence" value="ECO:0000247"/>
    <property type="project" value="NTNU_SB"/>
</dbReference>
<dbReference type="GO" id="GO:0140297">
    <property type="term" value="F:DNA-binding transcription factor binding"/>
    <property type="evidence" value="ECO:0000353"/>
    <property type="project" value="UniProtKB"/>
</dbReference>
<dbReference type="GO" id="GO:0000977">
    <property type="term" value="F:RNA polymerase II transcription regulatory region sequence-specific DNA binding"/>
    <property type="evidence" value="ECO:0000314"/>
    <property type="project" value="NTNU_SB"/>
</dbReference>
<dbReference type="GO" id="GO:0009887">
    <property type="term" value="P:animal organ morphogenesis"/>
    <property type="evidence" value="ECO:0000318"/>
    <property type="project" value="GO_Central"/>
</dbReference>
<dbReference type="GO" id="GO:0007420">
    <property type="term" value="P:brain development"/>
    <property type="evidence" value="ECO:0000318"/>
    <property type="project" value="GO_Central"/>
</dbReference>
<dbReference type="GO" id="GO:0030326">
    <property type="term" value="P:embryonic limb morphogenesis"/>
    <property type="evidence" value="ECO:0007669"/>
    <property type="project" value="Ensembl"/>
</dbReference>
<dbReference type="GO" id="GO:0048568">
    <property type="term" value="P:embryonic organ development"/>
    <property type="evidence" value="ECO:0000318"/>
    <property type="project" value="GO_Central"/>
</dbReference>
<dbReference type="GO" id="GO:0001654">
    <property type="term" value="P:eye development"/>
    <property type="evidence" value="ECO:0000318"/>
    <property type="project" value="GO_Central"/>
</dbReference>
<dbReference type="GO" id="GO:0048666">
    <property type="term" value="P:neuron development"/>
    <property type="evidence" value="ECO:0000318"/>
    <property type="project" value="GO_Central"/>
</dbReference>
<dbReference type="GO" id="GO:0045944">
    <property type="term" value="P:positive regulation of transcription by RNA polymerase II"/>
    <property type="evidence" value="ECO:0000314"/>
    <property type="project" value="NTNU_SB"/>
</dbReference>
<dbReference type="GO" id="GO:0009954">
    <property type="term" value="P:proximal/distal pattern formation"/>
    <property type="evidence" value="ECO:0007669"/>
    <property type="project" value="Ensembl"/>
</dbReference>
<dbReference type="CDD" id="cd00086">
    <property type="entry name" value="homeodomain"/>
    <property type="match status" value="1"/>
</dbReference>
<dbReference type="FunFam" id="1.10.10.60:FF:000008">
    <property type="entry name" value="Pre-B-cell leukemia transcription factor 1"/>
    <property type="match status" value="1"/>
</dbReference>
<dbReference type="Gene3D" id="1.10.10.60">
    <property type="entry name" value="Homeodomain-like"/>
    <property type="match status" value="1"/>
</dbReference>
<dbReference type="InterPro" id="IPR001356">
    <property type="entry name" value="HD"/>
</dbReference>
<dbReference type="InterPro" id="IPR017970">
    <property type="entry name" value="Homeobox_CS"/>
</dbReference>
<dbReference type="InterPro" id="IPR009057">
    <property type="entry name" value="Homeodomain-like_sf"/>
</dbReference>
<dbReference type="InterPro" id="IPR008422">
    <property type="entry name" value="KN_HD"/>
</dbReference>
<dbReference type="InterPro" id="IPR005542">
    <property type="entry name" value="PBX_PBC_dom"/>
</dbReference>
<dbReference type="InterPro" id="IPR050224">
    <property type="entry name" value="TALE_homeobox"/>
</dbReference>
<dbReference type="PANTHER" id="PTHR11850">
    <property type="entry name" value="HOMEOBOX PROTEIN TRANSCRIPTION FACTORS"/>
    <property type="match status" value="1"/>
</dbReference>
<dbReference type="Pfam" id="PF05920">
    <property type="entry name" value="Homeobox_KN"/>
    <property type="match status" value="1"/>
</dbReference>
<dbReference type="Pfam" id="PF03792">
    <property type="entry name" value="PBC"/>
    <property type="match status" value="1"/>
</dbReference>
<dbReference type="SMART" id="SM00389">
    <property type="entry name" value="HOX"/>
    <property type="match status" value="1"/>
</dbReference>
<dbReference type="SUPFAM" id="SSF46689">
    <property type="entry name" value="Homeodomain-like"/>
    <property type="match status" value="1"/>
</dbReference>
<dbReference type="PROSITE" id="PS00027">
    <property type="entry name" value="HOMEOBOX_1"/>
    <property type="match status" value="1"/>
</dbReference>
<dbReference type="PROSITE" id="PS50071">
    <property type="entry name" value="HOMEOBOX_2"/>
    <property type="match status" value="1"/>
</dbReference>
<dbReference type="PROSITE" id="PS51978">
    <property type="entry name" value="PBC"/>
    <property type="match status" value="1"/>
</dbReference>
<keyword id="KW-0010">Activator</keyword>
<keyword id="KW-0238">DNA-binding</keyword>
<keyword id="KW-0371">Homeobox</keyword>
<keyword id="KW-0539">Nucleus</keyword>
<keyword id="KW-0597">Phosphoprotein</keyword>
<keyword id="KW-1267">Proteomics identification</keyword>
<keyword id="KW-1185">Reference proteome</keyword>
<keyword id="KW-0804">Transcription</keyword>
<keyword id="KW-0805">Transcription regulation</keyword>
<gene>
    <name type="primary">PBX2</name>
    <name type="synonym">G17</name>
</gene>
<feature type="chain" id="PRO_0000049237" description="Pre-B-cell leukemia transcription factor 2">
    <location>
        <begin position="1"/>
        <end position="430"/>
    </location>
</feature>
<feature type="domain" description="PBC" evidence="3">
    <location>
        <begin position="48"/>
        <end position="243"/>
    </location>
</feature>
<feature type="DNA-binding region" description="Homeobox; TALE-type" evidence="2">
    <location>
        <begin position="244"/>
        <end position="306"/>
    </location>
</feature>
<feature type="region of interest" description="Disordered" evidence="4">
    <location>
        <begin position="1"/>
        <end position="52"/>
    </location>
</feature>
<feature type="region of interest" description="PBC-A" evidence="3">
    <location>
        <begin position="55"/>
        <end position="134"/>
    </location>
</feature>
<feature type="region of interest" description="PBC-B" evidence="3">
    <location>
        <begin position="137"/>
        <end position="243"/>
    </location>
</feature>
<feature type="region of interest" description="Disordered" evidence="4">
    <location>
        <begin position="326"/>
        <end position="347"/>
    </location>
</feature>
<feature type="region of interest" description="Disordered" evidence="4">
    <location>
        <begin position="378"/>
        <end position="430"/>
    </location>
</feature>
<feature type="compositionally biased region" description="Gly residues" evidence="4">
    <location>
        <begin position="13"/>
        <end position="48"/>
    </location>
</feature>
<feature type="compositionally biased region" description="Gly residues" evidence="4">
    <location>
        <begin position="380"/>
        <end position="392"/>
    </location>
</feature>
<feature type="compositionally biased region" description="Polar residues" evidence="4">
    <location>
        <begin position="403"/>
        <end position="418"/>
    </location>
</feature>
<feature type="modified residue" description="Phosphoserine" evidence="12 13">
    <location>
        <position position="136"/>
    </location>
</feature>
<feature type="modified residue" description="Phosphoserine" evidence="8 9 10 12">
    <location>
        <position position="151"/>
    </location>
</feature>
<feature type="modified residue" description="Phosphoserine" evidence="1">
    <location>
        <position position="159"/>
    </location>
</feature>
<feature type="modified residue" description="Phosphoserine" evidence="9 11 12">
    <location>
        <position position="330"/>
    </location>
</feature>
<feature type="modified residue" description="Phosphoserine" evidence="1">
    <location>
        <position position="395"/>
    </location>
</feature>
<feature type="sequence conflict" description="In Ref. 1; CAA42503." evidence="7" ref="1">
    <original>M</original>
    <variation>I</variation>
    <location>
        <position position="393"/>
    </location>
</feature>
<protein>
    <recommendedName>
        <fullName>Pre-B-cell leukemia transcription factor 2</fullName>
    </recommendedName>
    <alternativeName>
        <fullName>Homeobox protein PBX2</fullName>
    </alternativeName>
    <alternativeName>
        <fullName>Protein G17</fullName>
    </alternativeName>
</protein>
<evidence type="ECO:0000250" key="1">
    <source>
        <dbReference type="UniProtKB" id="O35984"/>
    </source>
</evidence>
<evidence type="ECO:0000255" key="2">
    <source>
        <dbReference type="PROSITE-ProRule" id="PRU00108"/>
    </source>
</evidence>
<evidence type="ECO:0000255" key="3">
    <source>
        <dbReference type="PROSITE-ProRule" id="PRU01322"/>
    </source>
</evidence>
<evidence type="ECO:0000256" key="4">
    <source>
        <dbReference type="SAM" id="MobiDB-lite"/>
    </source>
</evidence>
<evidence type="ECO:0000269" key="5">
    <source>
    </source>
</evidence>
<evidence type="ECO:0000269" key="6">
    <source>
    </source>
</evidence>
<evidence type="ECO:0000305" key="7"/>
<evidence type="ECO:0007744" key="8">
    <source>
    </source>
</evidence>
<evidence type="ECO:0007744" key="9">
    <source>
    </source>
</evidence>
<evidence type="ECO:0007744" key="10">
    <source>
    </source>
</evidence>
<evidence type="ECO:0007744" key="11">
    <source>
    </source>
</evidence>
<evidence type="ECO:0007744" key="12">
    <source>
    </source>
</evidence>
<evidence type="ECO:0007744" key="13">
    <source>
    </source>
</evidence>
<organism>
    <name type="scientific">Homo sapiens</name>
    <name type="common">Human</name>
    <dbReference type="NCBI Taxonomy" id="9606"/>
    <lineage>
        <taxon>Eukaryota</taxon>
        <taxon>Metazoa</taxon>
        <taxon>Chordata</taxon>
        <taxon>Craniata</taxon>
        <taxon>Vertebrata</taxon>
        <taxon>Euteleostomi</taxon>
        <taxon>Mammalia</taxon>
        <taxon>Eutheria</taxon>
        <taxon>Euarchontoglires</taxon>
        <taxon>Primates</taxon>
        <taxon>Haplorrhini</taxon>
        <taxon>Catarrhini</taxon>
        <taxon>Hominidae</taxon>
        <taxon>Homo</taxon>
    </lineage>
</organism>
<accession>P40425</accession>
<accession>A2BFJ2</accession>
<comment type="function">
    <text evidence="6">Transcriptional activator that binds the sequence 5'-ATCAATCAA-3'. Activates transcription of PF4 in complex with MEIS1.</text>
</comment>
<comment type="subunit">
    <text evidence="5 6">Forms heterodimers with MEIS1 and heterotrimers with MEIS1 and HOXA9. Interacts with PBXIP1.</text>
</comment>
<comment type="interaction">
    <interactant intactId="EBI-348489">
        <id>P40425</id>
    </interactant>
    <interactant intactId="EBI-10229433">
        <id>Q13515</id>
        <label>BFSP2</label>
    </interactant>
    <organismsDiffer>false</organismsDiffer>
    <experiments>3</experiments>
</comment>
<comment type="interaction">
    <interactant intactId="EBI-348489">
        <id>P40425</id>
    </interactant>
    <interactant intactId="EBI-465861">
        <id>Q8TDH9</id>
        <label>BLOC1S5</label>
    </interactant>
    <organismsDiffer>false</organismsDiffer>
    <experiments>3</experiments>
</comment>
<comment type="interaction">
    <interactant intactId="EBI-348489">
        <id>P40425</id>
    </interactant>
    <interactant intactId="EBI-5666615">
        <id>Q5PSV4</id>
        <label>BRMS1L</label>
    </interactant>
    <organismsDiffer>false</organismsDiffer>
    <experiments>3</experiments>
</comment>
<comment type="interaction">
    <interactant intactId="EBI-348489">
        <id>P40425</id>
    </interactant>
    <interactant intactId="EBI-751319">
        <id>Q9H257</id>
        <label>CARD9</label>
    </interactant>
    <organismsDiffer>false</organismsDiffer>
    <experiments>3</experiments>
</comment>
<comment type="interaction">
    <interactant intactId="EBI-348489">
        <id>P40425</id>
    </interactant>
    <interactant intactId="EBI-5278764">
        <id>Q96GN5</id>
        <label>CDCA7L</label>
    </interactant>
    <organismsDiffer>false</organismsDiffer>
    <experiments>3</experiments>
</comment>
<comment type="interaction">
    <interactant intactId="EBI-348489">
        <id>P40425</id>
    </interactant>
    <interactant intactId="EBI-743105">
        <id>Q5JVL4</id>
        <label>EFHC1</label>
    </interactant>
    <organismsDiffer>false</organismsDiffer>
    <experiments>3</experiments>
</comment>
<comment type="interaction">
    <interactant intactId="EBI-348489">
        <id>P40425</id>
    </interactant>
    <interactant intactId="EBI-6658203">
        <id>Q86YD7</id>
        <label>FAM90A1</label>
    </interactant>
    <organismsDiffer>false</organismsDiffer>
    <experiments>3</experiments>
</comment>
<comment type="interaction">
    <interactant intactId="EBI-348489">
        <id>P40425</id>
    </interactant>
    <interactant intactId="EBI-740785">
        <id>P49639</id>
        <label>HOXA1</label>
    </interactant>
    <organismsDiffer>false</organismsDiffer>
    <experiments>3</experiments>
</comment>
<comment type="interaction">
    <interactant intactId="EBI-348489">
        <id>P40425</id>
    </interactant>
    <interactant intactId="EBI-8470697">
        <id>P20719</id>
        <label>HOXA5</label>
    </interactant>
    <organismsDiffer>false</organismsDiffer>
    <experiments>5</experiments>
</comment>
<comment type="interaction">
    <interactant intactId="EBI-348489">
        <id>P40425</id>
    </interactant>
    <interactant intactId="EBI-3893317">
        <id>P09067</id>
        <label>HOXB5</label>
    </interactant>
    <organismsDiffer>false</organismsDiffer>
    <experiments>3</experiments>
</comment>
<comment type="interaction">
    <interactant intactId="EBI-348489">
        <id>P40425</id>
    </interactant>
    <interactant intactId="EBI-11955357">
        <id>Q00444</id>
        <label>HOXC5</label>
    </interactant>
    <organismsDiffer>false</organismsDiffer>
    <experiments>3</experiments>
</comment>
<comment type="interaction">
    <interactant intactId="EBI-348489">
        <id>P40425</id>
    </interactant>
    <interactant intactId="EBI-1752118">
        <id>P31273</id>
        <label>HOXC8</label>
    </interactant>
    <organismsDiffer>false</organismsDiffer>
    <experiments>3</experiments>
</comment>
<comment type="interaction">
    <interactant intactId="EBI-348489">
        <id>P40425</id>
    </interactant>
    <interactant intactId="EBI-1779423">
        <id>P31274</id>
        <label>HOXC9</label>
    </interactant>
    <organismsDiffer>false</organismsDiffer>
    <experiments>3</experiments>
</comment>
<comment type="interaction">
    <interactant intactId="EBI-348489">
        <id>P40425</id>
    </interactant>
    <interactant intactId="EBI-10229059">
        <id>Q13394</id>
        <label>MAB21L1</label>
    </interactant>
    <organismsDiffer>false</organismsDiffer>
    <experiments>3</experiments>
</comment>
<comment type="interaction">
    <interactant intactId="EBI-348489">
        <id>P40425</id>
    </interactant>
    <interactant intactId="EBI-740310">
        <id>O60682</id>
        <label>MSC</label>
    </interactant>
    <organismsDiffer>false</organismsDiffer>
    <experiments>3</experiments>
</comment>
<comment type="interaction">
    <interactant intactId="EBI-348489">
        <id>P40425</id>
    </interactant>
    <interactant intactId="EBI-1373569">
        <id>P55347</id>
        <label>PKNOX1</label>
    </interactant>
    <organismsDiffer>false</organismsDiffer>
    <experiments>4</experiments>
</comment>
<comment type="interaction">
    <interactant intactId="EBI-348489">
        <id>P40425</id>
    </interactant>
    <interactant intactId="EBI-1045582">
        <id>Q86W92</id>
        <label>PPFIBP1</label>
    </interactant>
    <organismsDiffer>false</organismsDiffer>
    <experiments>3</experiments>
</comment>
<comment type="interaction">
    <interactant intactId="EBI-348489">
        <id>P40425</id>
    </interactant>
    <interactant intactId="EBI-10246897">
        <id>Q5TAB7</id>
        <label>RIPPLY2</label>
    </interactant>
    <organismsDiffer>false</organismsDiffer>
    <experiments>5</experiments>
</comment>
<comment type="interaction">
    <interactant intactId="EBI-348489">
        <id>P40425</id>
    </interactant>
    <interactant intactId="EBI-2820655">
        <id>P31314</id>
        <label>TLX1</label>
    </interactant>
    <organismsDiffer>false</organismsDiffer>
    <experiments>3</experiments>
</comment>
<comment type="interaction">
    <interactant intactId="EBI-348489">
        <id>P40425</id>
    </interactant>
    <interactant intactId="EBI-12274792">
        <id>Q504Y3</id>
        <label>ZCWPW2</label>
    </interactant>
    <organismsDiffer>false</organismsDiffer>
    <experiments>3</experiments>
</comment>
<comment type="interaction">
    <interactant intactId="EBI-348489">
        <id>P40425</id>
    </interactant>
    <interactant intactId="EBI-6427977">
        <id>Q96SQ5</id>
        <label>ZNF587</label>
    </interactant>
    <organismsDiffer>false</organismsDiffer>
    <experiments>3</experiments>
</comment>
<comment type="subcellular location">
    <subcellularLocation>
        <location evidence="7">Nucleus</location>
    </subcellularLocation>
</comment>
<comment type="tissue specificity">
    <text>Ubiquitously expressed.</text>
</comment>
<comment type="similarity">
    <text evidence="7">Belongs to the TALE/PBX homeobox family.</text>
</comment>